<keyword id="KW-0004">4Fe-4S</keyword>
<keyword id="KW-0170">Cobalt</keyword>
<keyword id="KW-0408">Iron</keyword>
<keyword id="KW-0411">Iron-sulfur</keyword>
<keyword id="KW-0479">Metal-binding</keyword>
<keyword id="KW-0489">Methyltransferase</keyword>
<keyword id="KW-1185">Reference proteome</keyword>
<keyword id="KW-0808">Transferase</keyword>
<feature type="chain" id="PRO_0000155120" description="Acetyl-CoA decarbonylase/synthase complex subunit gamma">
    <location>
        <begin position="1"/>
        <end position="488"/>
    </location>
</feature>
<feature type="domain" description="4Fe-4S" evidence="2">
    <location>
        <begin position="1"/>
        <end position="61"/>
    </location>
</feature>
<feature type="binding site" evidence="1">
    <location>
        <position position="19"/>
    </location>
    <ligand>
        <name>[4Fe-4S] cluster</name>
        <dbReference type="ChEBI" id="CHEBI:49883"/>
    </ligand>
</feature>
<feature type="binding site" evidence="1">
    <location>
        <position position="22"/>
    </location>
    <ligand>
        <name>[4Fe-4S] cluster</name>
        <dbReference type="ChEBI" id="CHEBI:49883"/>
    </ligand>
</feature>
<feature type="binding site" evidence="1">
    <location>
        <position position="27"/>
    </location>
    <ligand>
        <name>[4Fe-4S] cluster</name>
        <dbReference type="ChEBI" id="CHEBI:49883"/>
    </ligand>
</feature>
<feature type="binding site" evidence="1">
    <location>
        <position position="44"/>
    </location>
    <ligand>
        <name>[4Fe-4S] cluster</name>
        <dbReference type="ChEBI" id="CHEBI:49883"/>
    </ligand>
</feature>
<sequence>MPKKISAMDIYKLLPKTNCKKCGYPSCMAFATKLLEKEATIDQCPILNTPKFEKNKKKIIELISPPVKEVWFGNEEKKAVMGGDEVMYRYQLSFFNPTPIGVDISDELSEEEIKNRAKEIENFVFERTGEKLKLDFIVIRNASGDVEKFKKAIEIVEKETKMPICIASLNPEVIKEALKVVKSKPMVYAATKETLNDFIKVIKEVKKDVVLVLSSNNVKDLKNMAAKCLANGIEDLVLEPHTYPENIAETLDLNVMIRRSAIEKEDKYLGFPILNLPINAYYYALKNECPISGFFEDKEVVAKMFEATIANTLMNRYADALIMHGMDIWELMPVLTLRQCIYTDPRKPQAVEPGLYPIGNPDENSPVILTTNFSLTFYTVTGDFEKDNVTCWLLVMDTGGKAVDVSVAGGQYNGENAKKLIEETGIADKVSHRIIILPALAASTRGDIEDKTGWTCVVGTRDSSQVGDFLRNNWDKILKEWKEKNQTA</sequence>
<protein>
    <recommendedName>
        <fullName evidence="1">Acetyl-CoA decarbonylase/synthase complex subunit gamma</fullName>
        <shortName evidence="1">ACDS complex subunit gamma</shortName>
        <ecNumber evidence="1">2.1.1.245</ecNumber>
    </recommendedName>
    <alternativeName>
        <fullName evidence="1">5-methyltetrahydrosarcinapterin:corrinoid/iron-sulfur protein Co-methyltransferase</fullName>
    </alternativeName>
    <alternativeName>
        <fullName evidence="1">ACDS complex methyltransferase</fullName>
    </alternativeName>
    <alternativeName>
        <fullName evidence="1">Corrinoid/iron-sulfur component large subunit</fullName>
    </alternativeName>
</protein>
<evidence type="ECO:0000255" key="1">
    <source>
        <dbReference type="HAMAP-Rule" id="MF_01136"/>
    </source>
</evidence>
<evidence type="ECO:0000255" key="2">
    <source>
        <dbReference type="PROSITE-ProRule" id="PRU00989"/>
    </source>
</evidence>
<dbReference type="EC" id="2.1.1.245" evidence="1"/>
<dbReference type="EMBL" id="L77117">
    <property type="protein sequence ID" value="AAB98093.1"/>
    <property type="molecule type" value="Genomic_DNA"/>
</dbReference>
<dbReference type="PIR" id="H64313">
    <property type="entry name" value="H64313"/>
</dbReference>
<dbReference type="RefSeq" id="WP_010869604.1">
    <property type="nucleotide sequence ID" value="NC_000909.1"/>
</dbReference>
<dbReference type="SMR" id="Q57576"/>
<dbReference type="FunCoup" id="Q57576">
    <property type="interactions" value="90"/>
</dbReference>
<dbReference type="STRING" id="243232.MJ_0112"/>
<dbReference type="PaxDb" id="243232-MJ_0112"/>
<dbReference type="EnsemblBacteria" id="AAB98093">
    <property type="protein sequence ID" value="AAB98093"/>
    <property type="gene ID" value="MJ_0112"/>
</dbReference>
<dbReference type="GeneID" id="1450953"/>
<dbReference type="KEGG" id="mja:MJ_0112"/>
<dbReference type="eggNOG" id="arCOG01979">
    <property type="taxonomic scope" value="Archaea"/>
</dbReference>
<dbReference type="HOGENOM" id="CLU_050002_0_0_2"/>
<dbReference type="InParanoid" id="Q57576"/>
<dbReference type="OrthoDB" id="146240at2157"/>
<dbReference type="PhylomeDB" id="Q57576"/>
<dbReference type="Proteomes" id="UP000000805">
    <property type="component" value="Chromosome"/>
</dbReference>
<dbReference type="GO" id="GO:0051539">
    <property type="term" value="F:4 iron, 4 sulfur cluster binding"/>
    <property type="evidence" value="ECO:0007669"/>
    <property type="project" value="UniProtKB-KW"/>
</dbReference>
<dbReference type="GO" id="GO:0005506">
    <property type="term" value="F:iron ion binding"/>
    <property type="evidence" value="ECO:0007669"/>
    <property type="project" value="UniProtKB-UniRule"/>
</dbReference>
<dbReference type="GO" id="GO:0008168">
    <property type="term" value="F:methyltransferase activity"/>
    <property type="evidence" value="ECO:0007669"/>
    <property type="project" value="UniProtKB-UniRule"/>
</dbReference>
<dbReference type="GO" id="GO:0046356">
    <property type="term" value="P:acetyl-CoA catabolic process"/>
    <property type="evidence" value="ECO:0007669"/>
    <property type="project" value="InterPro"/>
</dbReference>
<dbReference type="GO" id="GO:0032259">
    <property type="term" value="P:methylation"/>
    <property type="evidence" value="ECO:0007669"/>
    <property type="project" value="UniProtKB-KW"/>
</dbReference>
<dbReference type="Gene3D" id="3.40.50.11600">
    <property type="match status" value="1"/>
</dbReference>
<dbReference type="Gene3D" id="3.20.20.20">
    <property type="entry name" value="Dihydropteroate synthase-like"/>
    <property type="match status" value="1"/>
</dbReference>
<dbReference type="Gene3D" id="1.10.15.40">
    <property type="entry name" value="Electron transport complex subunit B, putative Fe-S cluster"/>
    <property type="match status" value="1"/>
</dbReference>
<dbReference type="HAMAP" id="MF_01136">
    <property type="entry name" value="CdhE"/>
    <property type="match status" value="1"/>
</dbReference>
<dbReference type="InterPro" id="IPR007202">
    <property type="entry name" value="4Fe-4S_dom"/>
</dbReference>
<dbReference type="InterPro" id="IPR016041">
    <property type="entry name" value="Ac-CoA_synth_d_su_TIM-brl"/>
</dbReference>
<dbReference type="InterPro" id="IPR051069">
    <property type="entry name" value="ACDS_complex_subunit"/>
</dbReference>
<dbReference type="InterPro" id="IPR016218">
    <property type="entry name" value="AcylCoA_decarb/synth_gsu"/>
</dbReference>
<dbReference type="InterPro" id="IPR023427">
    <property type="entry name" value="AcylCoA_decarb/synth_gsu_arc"/>
</dbReference>
<dbReference type="InterPro" id="IPR011005">
    <property type="entry name" value="Dihydropteroate_synth-like_sf"/>
</dbReference>
<dbReference type="NCBIfam" id="NF003195">
    <property type="entry name" value="PRK04165.1"/>
    <property type="match status" value="1"/>
</dbReference>
<dbReference type="PANTHER" id="PTHR36214">
    <property type="match status" value="1"/>
</dbReference>
<dbReference type="PANTHER" id="PTHR36214:SF3">
    <property type="entry name" value="ACETYL-COA DECARBONYLASE_SYNTHASE COMPLEX SUBUNIT GAMMA"/>
    <property type="match status" value="1"/>
</dbReference>
<dbReference type="Pfam" id="PF03599">
    <property type="entry name" value="CdhD"/>
    <property type="match status" value="1"/>
</dbReference>
<dbReference type="Pfam" id="PF04060">
    <property type="entry name" value="FeS"/>
    <property type="match status" value="1"/>
</dbReference>
<dbReference type="PIRSF" id="PIRSF000376">
    <property type="entry name" value="AcCoA_decarb_gamma"/>
    <property type="match status" value="1"/>
</dbReference>
<dbReference type="SUPFAM" id="SSF51717">
    <property type="entry name" value="Dihydropteroate synthetase-like"/>
    <property type="match status" value="1"/>
</dbReference>
<dbReference type="PROSITE" id="PS51656">
    <property type="entry name" value="4FE4S"/>
    <property type="match status" value="1"/>
</dbReference>
<reference key="1">
    <citation type="journal article" date="1996" name="Science">
        <title>Complete genome sequence of the methanogenic archaeon, Methanococcus jannaschii.</title>
        <authorList>
            <person name="Bult C.J."/>
            <person name="White O."/>
            <person name="Olsen G.J."/>
            <person name="Zhou L."/>
            <person name="Fleischmann R.D."/>
            <person name="Sutton G.G."/>
            <person name="Blake J.A."/>
            <person name="FitzGerald L.M."/>
            <person name="Clayton R.A."/>
            <person name="Gocayne J.D."/>
            <person name="Kerlavage A.R."/>
            <person name="Dougherty B.A."/>
            <person name="Tomb J.-F."/>
            <person name="Adams M.D."/>
            <person name="Reich C.I."/>
            <person name="Overbeek R."/>
            <person name="Kirkness E.F."/>
            <person name="Weinstock K.G."/>
            <person name="Merrick J.M."/>
            <person name="Glodek A."/>
            <person name="Scott J.L."/>
            <person name="Geoghagen N.S.M."/>
            <person name="Weidman J.F."/>
            <person name="Fuhrmann J.L."/>
            <person name="Nguyen D."/>
            <person name="Utterback T.R."/>
            <person name="Kelley J.M."/>
            <person name="Peterson J.D."/>
            <person name="Sadow P.W."/>
            <person name="Hanna M.C."/>
            <person name="Cotton M.D."/>
            <person name="Roberts K.M."/>
            <person name="Hurst M.A."/>
            <person name="Kaine B.P."/>
            <person name="Borodovsky M."/>
            <person name="Klenk H.-P."/>
            <person name="Fraser C.M."/>
            <person name="Smith H.O."/>
            <person name="Woese C.R."/>
            <person name="Venter J.C."/>
        </authorList>
    </citation>
    <scope>NUCLEOTIDE SEQUENCE [LARGE SCALE GENOMIC DNA]</scope>
    <source>
        <strain>ATCC 43067 / DSM 2661 / JAL-1 / JCM 10045 / NBRC 100440</strain>
    </source>
</reference>
<proteinExistence type="inferred from homology"/>
<organism>
    <name type="scientific">Methanocaldococcus jannaschii (strain ATCC 43067 / DSM 2661 / JAL-1 / JCM 10045 / NBRC 100440)</name>
    <name type="common">Methanococcus jannaschii</name>
    <dbReference type="NCBI Taxonomy" id="243232"/>
    <lineage>
        <taxon>Archaea</taxon>
        <taxon>Methanobacteriati</taxon>
        <taxon>Methanobacteriota</taxon>
        <taxon>Methanomada group</taxon>
        <taxon>Methanococci</taxon>
        <taxon>Methanococcales</taxon>
        <taxon>Methanocaldococcaceae</taxon>
        <taxon>Methanocaldococcus</taxon>
    </lineage>
</organism>
<accession>Q57576</accession>
<comment type="function">
    <text evidence="1">Part of a complex that catalyzes the reversible cleavage of acetyl-CoA, allowing autotrophic growth from CO(2).</text>
</comment>
<comment type="catalytic activity">
    <reaction evidence="1">
        <text>5,6,7,8-tetrahydrosarcinapterin + methyl-Co(III)-[corrinoid Fe-S protein] = 5-methyltetrahydrosarcinapterin + Co(I)-[corrinoid Fe-S protein] + H(+)</text>
        <dbReference type="Rhea" id="RHEA:45196"/>
        <dbReference type="Rhea" id="RHEA-COMP:11110"/>
        <dbReference type="Rhea" id="RHEA-COMP:11111"/>
        <dbReference type="ChEBI" id="CHEBI:15378"/>
        <dbReference type="ChEBI" id="CHEBI:59924"/>
        <dbReference type="ChEBI" id="CHEBI:64267"/>
        <dbReference type="ChEBI" id="CHEBI:85033"/>
        <dbReference type="ChEBI" id="CHEBI:85035"/>
        <dbReference type="EC" id="2.1.1.245"/>
    </reaction>
</comment>
<comment type="cofactor">
    <cofactor evidence="1">
        <name>corrinoid</name>
        <dbReference type="ChEBI" id="CHEBI:33913"/>
    </cofactor>
</comment>
<comment type="cofactor">
    <cofactor evidence="1">
        <name>[4Fe-4S] cluster</name>
        <dbReference type="ChEBI" id="CHEBI:49883"/>
    </cofactor>
    <text evidence="1">Binds 1 [4Fe-4S] cluster.</text>
</comment>
<comment type="subunit">
    <text evidence="1">Heterodimer of delta and gamma chains. The ACDS complex is made up of alpha, epsilon, beta, gamma and delta chains with a probable stoichiometry of (alpha(2)epsilon(2))(4)-beta(8)-(gamma(1)delta(1))(8).</text>
</comment>
<gene>
    <name evidence="1" type="primary">cdhE</name>
    <name type="ordered locus">MJ0112</name>
</gene>
<name>ACDG_METJA</name>